<organism>
    <name type="scientific">Listeria monocytogenes serotype 4b (strain F2365)</name>
    <dbReference type="NCBI Taxonomy" id="265669"/>
    <lineage>
        <taxon>Bacteria</taxon>
        <taxon>Bacillati</taxon>
        <taxon>Bacillota</taxon>
        <taxon>Bacilli</taxon>
        <taxon>Bacillales</taxon>
        <taxon>Listeriaceae</taxon>
        <taxon>Listeria</taxon>
    </lineage>
</organism>
<sequence length="98" mass="10385">MAIESINAASVLPKVTLGETAKTDNATGAGNTFTQMLDSMSDTQSNAQTSVSNLLTTGEGNASDVLIQMKKAESEMKTAAVIRDNVIESYKQLLNMQV</sequence>
<gene>
    <name evidence="1" type="primary">fliE</name>
    <name type="ordered locus">LMOf2365_0748</name>
</gene>
<comment type="subcellular location">
    <subcellularLocation>
        <location evidence="1">Bacterial flagellum basal body</location>
    </subcellularLocation>
</comment>
<comment type="similarity">
    <text evidence="1">Belongs to the FliE family.</text>
</comment>
<accession>Q722I5</accession>
<keyword id="KW-0975">Bacterial flagellum</keyword>
<proteinExistence type="inferred from homology"/>
<reference key="1">
    <citation type="journal article" date="2004" name="Nucleic Acids Res.">
        <title>Whole genome comparisons of serotype 4b and 1/2a strains of the food-borne pathogen Listeria monocytogenes reveal new insights into the core genome components of this species.</title>
        <authorList>
            <person name="Nelson K.E."/>
            <person name="Fouts D.E."/>
            <person name="Mongodin E.F."/>
            <person name="Ravel J."/>
            <person name="DeBoy R.T."/>
            <person name="Kolonay J.F."/>
            <person name="Rasko D.A."/>
            <person name="Angiuoli S.V."/>
            <person name="Gill S.R."/>
            <person name="Paulsen I.T."/>
            <person name="Peterson J.D."/>
            <person name="White O."/>
            <person name="Nelson W.C."/>
            <person name="Nierman W.C."/>
            <person name="Beanan M.J."/>
            <person name="Brinkac L.M."/>
            <person name="Daugherty S.C."/>
            <person name="Dodson R.J."/>
            <person name="Durkin A.S."/>
            <person name="Madupu R."/>
            <person name="Haft D.H."/>
            <person name="Selengut J."/>
            <person name="Van Aken S.E."/>
            <person name="Khouri H.M."/>
            <person name="Fedorova N."/>
            <person name="Forberger H.A."/>
            <person name="Tran B."/>
            <person name="Kathariou S."/>
            <person name="Wonderling L.D."/>
            <person name="Uhlich G.A."/>
            <person name="Bayles D.O."/>
            <person name="Luchansky J.B."/>
            <person name="Fraser C.M."/>
        </authorList>
    </citation>
    <scope>NUCLEOTIDE SEQUENCE [LARGE SCALE GENOMIC DNA]</scope>
    <source>
        <strain>F2365</strain>
    </source>
</reference>
<dbReference type="EMBL" id="AE017262">
    <property type="protein sequence ID" value="AAT03529.1"/>
    <property type="molecule type" value="Genomic_DNA"/>
</dbReference>
<dbReference type="RefSeq" id="WP_003724447.1">
    <property type="nucleotide sequence ID" value="NC_002973.6"/>
</dbReference>
<dbReference type="SMR" id="Q722I5"/>
<dbReference type="GeneID" id="93234169"/>
<dbReference type="KEGG" id="lmf:LMOf2365_0748"/>
<dbReference type="HOGENOM" id="CLU_184999_0_0_9"/>
<dbReference type="GO" id="GO:0009425">
    <property type="term" value="C:bacterial-type flagellum basal body"/>
    <property type="evidence" value="ECO:0007669"/>
    <property type="project" value="UniProtKB-SubCell"/>
</dbReference>
<dbReference type="GO" id="GO:0003774">
    <property type="term" value="F:cytoskeletal motor activity"/>
    <property type="evidence" value="ECO:0007669"/>
    <property type="project" value="InterPro"/>
</dbReference>
<dbReference type="GO" id="GO:0005198">
    <property type="term" value="F:structural molecule activity"/>
    <property type="evidence" value="ECO:0007669"/>
    <property type="project" value="InterPro"/>
</dbReference>
<dbReference type="GO" id="GO:0071973">
    <property type="term" value="P:bacterial-type flagellum-dependent cell motility"/>
    <property type="evidence" value="ECO:0007669"/>
    <property type="project" value="InterPro"/>
</dbReference>
<dbReference type="HAMAP" id="MF_00724">
    <property type="entry name" value="FliE"/>
    <property type="match status" value="1"/>
</dbReference>
<dbReference type="InterPro" id="IPR001624">
    <property type="entry name" value="FliE"/>
</dbReference>
<dbReference type="NCBIfam" id="NF002466">
    <property type="entry name" value="PRK01699.1"/>
    <property type="match status" value="1"/>
</dbReference>
<dbReference type="PANTHER" id="PTHR34653">
    <property type="match status" value="1"/>
</dbReference>
<dbReference type="PANTHER" id="PTHR34653:SF1">
    <property type="entry name" value="FLAGELLAR HOOK-BASAL BODY COMPLEX PROTEIN FLIE"/>
    <property type="match status" value="1"/>
</dbReference>
<dbReference type="Pfam" id="PF02049">
    <property type="entry name" value="FliE"/>
    <property type="match status" value="1"/>
</dbReference>
<dbReference type="PRINTS" id="PR01006">
    <property type="entry name" value="FLGHOOKFLIE"/>
</dbReference>
<feature type="chain" id="PRO_0000105551" description="Flagellar hook-basal body complex protein FliE">
    <location>
        <begin position="1"/>
        <end position="98"/>
    </location>
</feature>
<feature type="region of interest" description="Disordered" evidence="2">
    <location>
        <begin position="22"/>
        <end position="56"/>
    </location>
</feature>
<feature type="compositionally biased region" description="Polar residues" evidence="2">
    <location>
        <begin position="23"/>
        <end position="56"/>
    </location>
</feature>
<name>FLIE_LISMF</name>
<evidence type="ECO:0000255" key="1">
    <source>
        <dbReference type="HAMAP-Rule" id="MF_00724"/>
    </source>
</evidence>
<evidence type="ECO:0000256" key="2">
    <source>
        <dbReference type="SAM" id="MobiDB-lite"/>
    </source>
</evidence>
<protein>
    <recommendedName>
        <fullName evidence="1">Flagellar hook-basal body complex protein FliE</fullName>
    </recommendedName>
</protein>